<sequence>MDWLAKYWWILVIVFLVGVLLNVIKDLKRVDHKKFLANKPELPPHRDFNDKWDDDDDWPKKDQPKK</sequence>
<name>YPFN_ECOLC</name>
<evidence type="ECO:0000255" key="1">
    <source>
        <dbReference type="HAMAP-Rule" id="MF_01566"/>
    </source>
</evidence>
<evidence type="ECO:0000256" key="2">
    <source>
        <dbReference type="SAM" id="MobiDB-lite"/>
    </source>
</evidence>
<keyword id="KW-1003">Cell membrane</keyword>
<keyword id="KW-0472">Membrane</keyword>
<keyword id="KW-0812">Transmembrane</keyword>
<keyword id="KW-1133">Transmembrane helix</keyword>
<protein>
    <recommendedName>
        <fullName evidence="1">UPF0370 protein YpfN</fullName>
    </recommendedName>
</protein>
<proteinExistence type="inferred from homology"/>
<organism>
    <name type="scientific">Escherichia coli (strain ATCC 8739 / DSM 1576 / NBRC 3972 / NCIMB 8545 / WDCM 00012 / Crooks)</name>
    <dbReference type="NCBI Taxonomy" id="481805"/>
    <lineage>
        <taxon>Bacteria</taxon>
        <taxon>Pseudomonadati</taxon>
        <taxon>Pseudomonadota</taxon>
        <taxon>Gammaproteobacteria</taxon>
        <taxon>Enterobacterales</taxon>
        <taxon>Enterobacteriaceae</taxon>
        <taxon>Escherichia</taxon>
    </lineage>
</organism>
<dbReference type="EMBL" id="CP000946">
    <property type="protein sequence ID" value="ACA76870.1"/>
    <property type="molecule type" value="Genomic_DNA"/>
</dbReference>
<dbReference type="RefSeq" id="WP_000383836.1">
    <property type="nucleotide sequence ID" value="NZ_MTFT01000002.1"/>
</dbReference>
<dbReference type="SMR" id="B1IWI7"/>
<dbReference type="KEGG" id="ecl:EcolC_1204"/>
<dbReference type="HOGENOM" id="CLU_198936_0_0_6"/>
<dbReference type="GO" id="GO:0005886">
    <property type="term" value="C:plasma membrane"/>
    <property type="evidence" value="ECO:0007669"/>
    <property type="project" value="UniProtKB-SubCell"/>
</dbReference>
<dbReference type="HAMAP" id="MF_01566">
    <property type="entry name" value="UPF0370"/>
    <property type="match status" value="1"/>
</dbReference>
<dbReference type="InterPro" id="IPR020910">
    <property type="entry name" value="UPF0370"/>
</dbReference>
<dbReference type="NCBIfam" id="NF010185">
    <property type="entry name" value="PRK13664.1"/>
    <property type="match status" value="1"/>
</dbReference>
<dbReference type="Pfam" id="PF13980">
    <property type="entry name" value="UPF0370"/>
    <property type="match status" value="1"/>
</dbReference>
<feature type="chain" id="PRO_1000087824" description="UPF0370 protein YpfN">
    <location>
        <begin position="1"/>
        <end position="66"/>
    </location>
</feature>
<feature type="transmembrane region" description="Helical" evidence="1">
    <location>
        <begin position="4"/>
        <end position="24"/>
    </location>
</feature>
<feature type="region of interest" description="Disordered" evidence="2">
    <location>
        <begin position="39"/>
        <end position="66"/>
    </location>
</feature>
<feature type="compositionally biased region" description="Basic and acidic residues" evidence="2">
    <location>
        <begin position="42"/>
        <end position="51"/>
    </location>
</feature>
<accession>B1IWI7</accession>
<comment type="subcellular location">
    <subcellularLocation>
        <location evidence="1">Cell membrane</location>
        <topology evidence="1">Single-pass membrane protein</topology>
    </subcellularLocation>
</comment>
<comment type="similarity">
    <text evidence="1">Belongs to the UPF0370 family.</text>
</comment>
<gene>
    <name evidence="1" type="primary">ypfN</name>
    <name type="ordered locus">EcolC_1204</name>
</gene>
<reference key="1">
    <citation type="submission" date="2008-02" db="EMBL/GenBank/DDBJ databases">
        <title>Complete sequence of Escherichia coli C str. ATCC 8739.</title>
        <authorList>
            <person name="Copeland A."/>
            <person name="Lucas S."/>
            <person name="Lapidus A."/>
            <person name="Glavina del Rio T."/>
            <person name="Dalin E."/>
            <person name="Tice H."/>
            <person name="Bruce D."/>
            <person name="Goodwin L."/>
            <person name="Pitluck S."/>
            <person name="Kiss H."/>
            <person name="Brettin T."/>
            <person name="Detter J.C."/>
            <person name="Han C."/>
            <person name="Kuske C.R."/>
            <person name="Schmutz J."/>
            <person name="Larimer F."/>
            <person name="Land M."/>
            <person name="Hauser L."/>
            <person name="Kyrpides N."/>
            <person name="Mikhailova N."/>
            <person name="Ingram L."/>
            <person name="Richardson P."/>
        </authorList>
    </citation>
    <scope>NUCLEOTIDE SEQUENCE [LARGE SCALE GENOMIC DNA]</scope>
    <source>
        <strain>ATCC 8739 / DSM 1576 / NBRC 3972 / NCIMB 8545 / WDCM 00012 / Crooks</strain>
    </source>
</reference>